<name>GERQ_BACSU</name>
<keyword id="KW-0309">Germination</keyword>
<keyword id="KW-1017">Isopeptide bond</keyword>
<keyword id="KW-1185">Reference proteome</keyword>
<keyword id="KW-0749">Sporulation</keyword>
<proteinExistence type="evidence at protein level"/>
<accession>P39620</accession>
<reference key="1">
    <citation type="journal article" date="1993" name="Mol. Microbiol.">
        <title>Bacillus subtilis genome project: cloning and sequencing of the 97 kb region from 325 degrees to 333 degrees.</title>
        <authorList>
            <person name="Glaser P."/>
            <person name="Kunst F."/>
            <person name="Arnaud M."/>
            <person name="Coudart M.P."/>
            <person name="Gonzales W."/>
            <person name="Hullo M.-F."/>
            <person name="Ionescu M."/>
            <person name="Lubochinsky B."/>
            <person name="Marcelino L."/>
            <person name="Moszer I."/>
            <person name="Presecan E."/>
            <person name="Santana M."/>
            <person name="Schneider E."/>
            <person name="Schweizer J."/>
            <person name="Vertes A."/>
            <person name="Rapoport G."/>
            <person name="Danchin A."/>
        </authorList>
    </citation>
    <scope>NUCLEOTIDE SEQUENCE [GENOMIC DNA]</scope>
    <source>
        <strain>168</strain>
    </source>
</reference>
<reference key="2">
    <citation type="journal article" date="1997" name="Nature">
        <title>The complete genome sequence of the Gram-positive bacterium Bacillus subtilis.</title>
        <authorList>
            <person name="Kunst F."/>
            <person name="Ogasawara N."/>
            <person name="Moszer I."/>
            <person name="Albertini A.M."/>
            <person name="Alloni G."/>
            <person name="Azevedo V."/>
            <person name="Bertero M.G."/>
            <person name="Bessieres P."/>
            <person name="Bolotin A."/>
            <person name="Borchert S."/>
            <person name="Borriss R."/>
            <person name="Boursier L."/>
            <person name="Brans A."/>
            <person name="Braun M."/>
            <person name="Brignell S.C."/>
            <person name="Bron S."/>
            <person name="Brouillet S."/>
            <person name="Bruschi C.V."/>
            <person name="Caldwell B."/>
            <person name="Capuano V."/>
            <person name="Carter N.M."/>
            <person name="Choi S.-K."/>
            <person name="Codani J.-J."/>
            <person name="Connerton I.F."/>
            <person name="Cummings N.J."/>
            <person name="Daniel R.A."/>
            <person name="Denizot F."/>
            <person name="Devine K.M."/>
            <person name="Duesterhoeft A."/>
            <person name="Ehrlich S.D."/>
            <person name="Emmerson P.T."/>
            <person name="Entian K.-D."/>
            <person name="Errington J."/>
            <person name="Fabret C."/>
            <person name="Ferrari E."/>
            <person name="Foulger D."/>
            <person name="Fritz C."/>
            <person name="Fujita M."/>
            <person name="Fujita Y."/>
            <person name="Fuma S."/>
            <person name="Galizzi A."/>
            <person name="Galleron N."/>
            <person name="Ghim S.-Y."/>
            <person name="Glaser P."/>
            <person name="Goffeau A."/>
            <person name="Golightly E.J."/>
            <person name="Grandi G."/>
            <person name="Guiseppi G."/>
            <person name="Guy B.J."/>
            <person name="Haga K."/>
            <person name="Haiech J."/>
            <person name="Harwood C.R."/>
            <person name="Henaut A."/>
            <person name="Hilbert H."/>
            <person name="Holsappel S."/>
            <person name="Hosono S."/>
            <person name="Hullo M.-F."/>
            <person name="Itaya M."/>
            <person name="Jones L.-M."/>
            <person name="Joris B."/>
            <person name="Karamata D."/>
            <person name="Kasahara Y."/>
            <person name="Klaerr-Blanchard M."/>
            <person name="Klein C."/>
            <person name="Kobayashi Y."/>
            <person name="Koetter P."/>
            <person name="Koningstein G."/>
            <person name="Krogh S."/>
            <person name="Kumano M."/>
            <person name="Kurita K."/>
            <person name="Lapidus A."/>
            <person name="Lardinois S."/>
            <person name="Lauber J."/>
            <person name="Lazarevic V."/>
            <person name="Lee S.-M."/>
            <person name="Levine A."/>
            <person name="Liu H."/>
            <person name="Masuda S."/>
            <person name="Mauel C."/>
            <person name="Medigue C."/>
            <person name="Medina N."/>
            <person name="Mellado R.P."/>
            <person name="Mizuno M."/>
            <person name="Moestl D."/>
            <person name="Nakai S."/>
            <person name="Noback M."/>
            <person name="Noone D."/>
            <person name="O'Reilly M."/>
            <person name="Ogawa K."/>
            <person name="Ogiwara A."/>
            <person name="Oudega B."/>
            <person name="Park S.-H."/>
            <person name="Parro V."/>
            <person name="Pohl T.M."/>
            <person name="Portetelle D."/>
            <person name="Porwollik S."/>
            <person name="Prescott A.M."/>
            <person name="Presecan E."/>
            <person name="Pujic P."/>
            <person name="Purnelle B."/>
            <person name="Rapoport G."/>
            <person name="Rey M."/>
            <person name="Reynolds S."/>
            <person name="Rieger M."/>
            <person name="Rivolta C."/>
            <person name="Rocha E."/>
            <person name="Roche B."/>
            <person name="Rose M."/>
            <person name="Sadaie Y."/>
            <person name="Sato T."/>
            <person name="Scanlan E."/>
            <person name="Schleich S."/>
            <person name="Schroeter R."/>
            <person name="Scoffone F."/>
            <person name="Sekiguchi J."/>
            <person name="Sekowska A."/>
            <person name="Seror S.J."/>
            <person name="Serror P."/>
            <person name="Shin B.-S."/>
            <person name="Soldo B."/>
            <person name="Sorokin A."/>
            <person name="Tacconi E."/>
            <person name="Takagi T."/>
            <person name="Takahashi H."/>
            <person name="Takemaru K."/>
            <person name="Takeuchi M."/>
            <person name="Tamakoshi A."/>
            <person name="Tanaka T."/>
            <person name="Terpstra P."/>
            <person name="Tognoni A."/>
            <person name="Tosato V."/>
            <person name="Uchiyama S."/>
            <person name="Vandenbol M."/>
            <person name="Vannier F."/>
            <person name="Vassarotti A."/>
            <person name="Viari A."/>
            <person name="Wambutt R."/>
            <person name="Wedler E."/>
            <person name="Wedler H."/>
            <person name="Weitzenegger T."/>
            <person name="Winters P."/>
            <person name="Wipat A."/>
            <person name="Yamamoto H."/>
            <person name="Yamane K."/>
            <person name="Yasumoto K."/>
            <person name="Yata K."/>
            <person name="Yoshida K."/>
            <person name="Yoshikawa H.-F."/>
            <person name="Zumstein E."/>
            <person name="Yoshikawa H."/>
            <person name="Danchin A."/>
        </authorList>
    </citation>
    <scope>NUCLEOTIDE SEQUENCE [LARGE SCALE GENOMIC DNA]</scope>
    <source>
        <strain>168</strain>
    </source>
</reference>
<reference key="3">
    <citation type="journal article" date="2003" name="J. Bacteriol.">
        <title>Identification of a new gene essential for germination of Bacillus subtilis spores with Ca2+-dipicolinate.</title>
        <authorList>
            <person name="Ragkousi K."/>
            <person name="Eichenberger P."/>
            <person name="van Ooij C."/>
            <person name="Setlow P."/>
        </authorList>
    </citation>
    <scope>FUNCTION</scope>
    <scope>SUBCELLULAR LOCATION</scope>
    <scope>DEVELOPMENTAL STAGE</scope>
    <scope>INDUCTION</scope>
    <source>
        <strain>168</strain>
    </source>
</reference>
<reference key="4">
    <citation type="journal article" date="2004" name="J. Bacteriol.">
        <title>Transglutaminase-mediated cross-linking of GerQ in the coats of Bacillus subtilis spores.</title>
        <authorList>
            <person name="Ragkousi K."/>
            <person name="Setlow P."/>
        </authorList>
    </citation>
    <scope>SUBUNIT</scope>
    <source>
        <strain>168</strain>
    </source>
</reference>
<reference key="5">
    <citation type="journal article" date="2005" name="J. Bacteriol.">
        <title>Assembly and function of a spore coat-associated transglutaminase of Bacillus subtilis.</title>
        <authorList>
            <person name="Zilhao R."/>
            <person name="Isticato R."/>
            <person name="Martins L.O."/>
            <person name="Steil L."/>
            <person name="Voelker U."/>
            <person name="Ricca E."/>
            <person name="Moran C.P. Jr."/>
            <person name="Henriques A.O."/>
        </authorList>
    </citation>
    <scope>SUBUNIT</scope>
    <source>
        <strain>168 / MB24</strain>
    </source>
</reference>
<reference key="6">
    <citation type="journal article" date="2006" name="J. Bacteriol.">
        <title>Localization of the transglutaminase cross-linking sites in the Bacillus subtilis spore coat protein GerQ.</title>
        <authorList>
            <person name="Monroe A."/>
            <person name="Setlow P."/>
        </authorList>
    </citation>
    <scope>PTM</scope>
    <scope>SUBCELLULAR LOCATION</scope>
    <scope>CROSS-LINKING DONOR SITES</scope>
    <scope>MUTAGENESIS OF 1-MET--LYS-5; LYS-2; LYS-4 AND LYS-5</scope>
    <source>
        <strain>168</strain>
    </source>
</reference>
<reference key="7">
    <citation type="journal article" date="2006" name="J. Biochem.">
        <title>Modification of GerQ reveals a functional relationship between Tgl and YabG in the coat of Bacillus subtilis spores.</title>
        <authorList>
            <person name="Kuwana R."/>
            <person name="Okuda N."/>
            <person name="Takamatsu H."/>
            <person name="Watabe K."/>
        </authorList>
    </citation>
    <scope>SUBUNIT</scope>
    <source>
        <strain>168</strain>
    </source>
</reference>
<reference key="8">
    <citation type="journal article" date="2010" name="J. Bacteriol.">
        <title>Localization of proteins to different layers and regions of Bacillus subtilis spore coats.</title>
        <authorList>
            <person name="Imamura D."/>
            <person name="Kuwana R."/>
            <person name="Takamatsu H."/>
            <person name="Watabe K."/>
        </authorList>
    </citation>
    <scope>SUBCELLULAR LOCATION</scope>
    <source>
        <strain>168</strain>
    </source>
</reference>
<protein>
    <recommendedName>
        <fullName>Spore coat protein GerQ</fullName>
    </recommendedName>
</protein>
<dbReference type="EMBL" id="X73124">
    <property type="protein sequence ID" value="CAA51618.1"/>
    <property type="molecule type" value="Genomic_DNA"/>
</dbReference>
<dbReference type="EMBL" id="AL009126">
    <property type="protein sequence ID" value="CAB15818.1"/>
    <property type="molecule type" value="Genomic_DNA"/>
</dbReference>
<dbReference type="PIR" id="S39717">
    <property type="entry name" value="S39717"/>
</dbReference>
<dbReference type="RefSeq" id="NP_391671.1">
    <property type="nucleotide sequence ID" value="NC_000964.3"/>
</dbReference>
<dbReference type="RefSeq" id="WP_003227448.1">
    <property type="nucleotide sequence ID" value="NZ_OZ025638.1"/>
</dbReference>
<dbReference type="SMR" id="P39620"/>
<dbReference type="FunCoup" id="P39620">
    <property type="interactions" value="22"/>
</dbReference>
<dbReference type="STRING" id="224308.BSU37920"/>
<dbReference type="PaxDb" id="224308-BSU37920"/>
<dbReference type="EnsemblBacteria" id="CAB15818">
    <property type="protein sequence ID" value="CAB15818"/>
    <property type="gene ID" value="BSU_37920"/>
</dbReference>
<dbReference type="GeneID" id="937241"/>
<dbReference type="KEGG" id="bsu:BSU37920"/>
<dbReference type="PATRIC" id="fig|224308.179.peg.4106"/>
<dbReference type="eggNOG" id="ENOG5032T03">
    <property type="taxonomic scope" value="Bacteria"/>
</dbReference>
<dbReference type="InParanoid" id="P39620"/>
<dbReference type="OrthoDB" id="1643178at2"/>
<dbReference type="BioCyc" id="BSUB:BSU37920-MONOMER"/>
<dbReference type="PRO" id="PR:P39620"/>
<dbReference type="Proteomes" id="UP000001570">
    <property type="component" value="Chromosome"/>
</dbReference>
<dbReference type="GO" id="GO:0031160">
    <property type="term" value="C:spore wall"/>
    <property type="evidence" value="ECO:0000314"/>
    <property type="project" value="UniProtKB"/>
</dbReference>
<dbReference type="GO" id="GO:0030435">
    <property type="term" value="P:sporulation resulting in formation of a cellular spore"/>
    <property type="evidence" value="ECO:0007669"/>
    <property type="project" value="UniProtKB-KW"/>
</dbReference>
<dbReference type="InterPro" id="IPR014099">
    <property type="entry name" value="Spore_coat_GerQ"/>
</dbReference>
<dbReference type="NCBIfam" id="TIGR02728">
    <property type="entry name" value="spore_gerQ"/>
    <property type="match status" value="1"/>
</dbReference>
<dbReference type="Pfam" id="PF09671">
    <property type="entry name" value="Spore_GerQ"/>
    <property type="match status" value="1"/>
</dbReference>
<dbReference type="PIRSF" id="PIRSF038931">
    <property type="entry name" value="GerQ"/>
    <property type="match status" value="1"/>
</dbReference>
<evidence type="ECO:0000256" key="1">
    <source>
        <dbReference type="SAM" id="MobiDB-lite"/>
    </source>
</evidence>
<evidence type="ECO:0000269" key="2">
    <source>
    </source>
</evidence>
<evidence type="ECO:0000269" key="3">
    <source>
    </source>
</evidence>
<evidence type="ECO:0000269" key="4">
    <source>
    </source>
</evidence>
<evidence type="ECO:0000269" key="5">
    <source>
    </source>
</evidence>
<evidence type="ECO:0000269" key="6">
    <source>
    </source>
</evidence>
<evidence type="ECO:0000269" key="7">
    <source>
    </source>
</evidence>
<sequence length="181" mass="20276">MKPKKNQYQQMQAFDNMQGYQPQFGANPYPQQGQGSQMQTMGMQPMMPMQQGQQGQQGQQGFGFPGQQQGGGFQIPSGPTPSGPGQSVPGMLPVEESYIENILRLNRGKTATIYMTFENSKEWGSKIFRGVIEAAGRDHIIISDPKSGTRYLLLTIYLDYITFDEEIAYTYPYSMASYSPR</sequence>
<comment type="function">
    <text evidence="2">Essential for the localization of CwlJ in the spore coat and for spore germination triggered by calcium and dipicolinic acid (DPA). Its assembly into the spore coat is dependent on the coat morphogenetic proteins CotE and SpoIVA.</text>
</comment>
<comment type="subunit">
    <text evidence="3 4 5">Multimer. Is cross-linked by Tgl and YabG into an insoluble high-molecular-mass complex that appears very late in sporulation.</text>
</comment>
<comment type="subcellular location">
    <subcellularLocation>
        <location evidence="2 6 7">Spore coat</location>
    </subcellularLocation>
</comment>
<comment type="developmental stage">
    <text evidence="2">Expressed during sporulation in mother cell compartment.</text>
</comment>
<comment type="induction">
    <text evidence="2">Expression is sigma E-dependent.</text>
</comment>
<comment type="PTM">
    <text>Three N-terminal lysines form epsilon-(gamma-glutamyl)lysine isopeptide bonds with glutamines of other spore coat proteins.</text>
</comment>
<feature type="chain" id="PRO_0000049968" description="Spore coat protein GerQ">
    <location>
        <begin position="1"/>
        <end position="181"/>
    </location>
</feature>
<feature type="region of interest" description="Disordered" evidence="1">
    <location>
        <begin position="19"/>
        <end position="89"/>
    </location>
</feature>
<feature type="compositionally biased region" description="Low complexity" evidence="1">
    <location>
        <begin position="30"/>
        <end position="57"/>
    </location>
</feature>
<feature type="compositionally biased region" description="Gly residues" evidence="1">
    <location>
        <begin position="58"/>
        <end position="73"/>
    </location>
</feature>
<feature type="cross-link" description="Isoglutamyl lysine isopeptide (Lys-Gln) (interchain with Q-?)">
    <location>
        <position position="2"/>
    </location>
</feature>
<feature type="cross-link" description="Isoglutamyl lysine isopeptide (Lys-Gln) (interchain with Q-?)">
    <location>
        <position position="4"/>
    </location>
</feature>
<feature type="cross-link" description="Isoglutamyl lysine isopeptide (Lys-Gln) (interchain with Q-?)">
    <location>
        <position position="5"/>
    </location>
</feature>
<feature type="mutagenesis site" description="Eliminates cross-linking." evidence="6">
    <location>
        <begin position="1"/>
        <end position="5"/>
    </location>
</feature>
<feature type="mutagenesis site" description="Cross-linking not affected. Cross-linking not affected; when associated with A,Q-4 or A,Q-5. Cross-linking eliminated, but still localizes CwlJ properly; when associated with A,Q-4 and A,Q-5." evidence="6">
    <original>K</original>
    <variation>A</variation>
    <variation>Q</variation>
    <location>
        <position position="2"/>
    </location>
</feature>
<feature type="mutagenesis site" description="Cross-linking not affected. Cross-linking not affected; when associated with A,Q-2 or A,Q-5. Cross-linking eliminated, but still localizes CwlJ properly; when associated with A,Q-2 and A,Q-5." evidence="6">
    <original>K</original>
    <variation>A</variation>
    <variation>Q</variation>
    <location>
        <position position="4"/>
    </location>
</feature>
<feature type="mutagenesis site" description="Cross-linking not affected. Cross-linking not affected; when associated with A,Q-2 or A,Q-4. Cross-linking eliminated, but still localizes CwlJ properly; when associated with A,Q-2 and A,Q-4." evidence="6">
    <original>K</original>
    <variation>A</variation>
    <variation>Q</variation>
    <location>
        <position position="5"/>
    </location>
</feature>
<organism>
    <name type="scientific">Bacillus subtilis (strain 168)</name>
    <dbReference type="NCBI Taxonomy" id="224308"/>
    <lineage>
        <taxon>Bacteria</taxon>
        <taxon>Bacillati</taxon>
        <taxon>Bacillota</taxon>
        <taxon>Bacilli</taxon>
        <taxon>Bacillales</taxon>
        <taxon>Bacillaceae</taxon>
        <taxon>Bacillus</taxon>
    </lineage>
</organism>
<gene>
    <name type="primary">gerQ</name>
    <name type="synonym">ywdL</name>
    <name type="ordered locus">BSU37920</name>
    <name type="ORF">ipa-62r</name>
</gene>